<dbReference type="EC" id="2.1.1.228" evidence="1"/>
<dbReference type="EMBL" id="CM003140">
    <property type="protein sequence ID" value="KIS71873.1"/>
    <property type="molecule type" value="Genomic_DNA"/>
</dbReference>
<dbReference type="RefSeq" id="XP_011386650.1">
    <property type="nucleotide sequence ID" value="XM_011388348.1"/>
</dbReference>
<dbReference type="FunCoup" id="Q4PHW2">
    <property type="interactions" value="330"/>
</dbReference>
<dbReference type="EnsemblFungi" id="KIS71873">
    <property type="protein sequence ID" value="KIS71873"/>
    <property type="gene ID" value="UMAG_10092"/>
</dbReference>
<dbReference type="GeneID" id="23566163"/>
<dbReference type="KEGG" id="uma:UMAG_10092"/>
<dbReference type="VEuPathDB" id="FungiDB:UMAG_10092"/>
<dbReference type="eggNOG" id="KOG2078">
    <property type="taxonomic scope" value="Eukaryota"/>
</dbReference>
<dbReference type="HOGENOM" id="CLU_521947_0_0_1"/>
<dbReference type="InParanoid" id="Q4PHW2"/>
<dbReference type="OrthoDB" id="408788at2759"/>
<dbReference type="Proteomes" id="UP000000561">
    <property type="component" value="Chromosome 1"/>
</dbReference>
<dbReference type="GO" id="GO:0005737">
    <property type="term" value="C:cytoplasm"/>
    <property type="evidence" value="ECO:0000318"/>
    <property type="project" value="GO_Central"/>
</dbReference>
<dbReference type="GO" id="GO:0005759">
    <property type="term" value="C:mitochondrial matrix"/>
    <property type="evidence" value="ECO:0000318"/>
    <property type="project" value="GO_Central"/>
</dbReference>
<dbReference type="GO" id="GO:0005634">
    <property type="term" value="C:nucleus"/>
    <property type="evidence" value="ECO:0007669"/>
    <property type="project" value="UniProtKB-SubCell"/>
</dbReference>
<dbReference type="GO" id="GO:0052906">
    <property type="term" value="F:tRNA (guanine(37)-N1)-methyltransferase activity"/>
    <property type="evidence" value="ECO:0007669"/>
    <property type="project" value="UniProtKB-UniRule"/>
</dbReference>
<dbReference type="GO" id="GO:0008175">
    <property type="term" value="F:tRNA methyltransferase activity"/>
    <property type="evidence" value="ECO:0000318"/>
    <property type="project" value="GO_Central"/>
</dbReference>
<dbReference type="GO" id="GO:0070901">
    <property type="term" value="P:mitochondrial tRNA methylation"/>
    <property type="evidence" value="ECO:0000318"/>
    <property type="project" value="GO_Central"/>
</dbReference>
<dbReference type="GO" id="GO:0002939">
    <property type="term" value="P:tRNA N1-guanine methylation"/>
    <property type="evidence" value="ECO:0000318"/>
    <property type="project" value="GO_Central"/>
</dbReference>
<dbReference type="FunFam" id="3.30.300.110:FF:000001">
    <property type="entry name" value="tRNA (guanine(37)-N1)-methyltransferase"/>
    <property type="match status" value="1"/>
</dbReference>
<dbReference type="Gene3D" id="3.30.300.110">
    <property type="entry name" value="Met-10+ protein-like domains"/>
    <property type="match status" value="1"/>
</dbReference>
<dbReference type="Gene3D" id="3.40.50.150">
    <property type="entry name" value="Vaccinia Virus protein VP39"/>
    <property type="match status" value="1"/>
</dbReference>
<dbReference type="HAMAP" id="MF_03152">
    <property type="entry name" value="TRM5"/>
    <property type="match status" value="1"/>
</dbReference>
<dbReference type="InterPro" id="IPR030382">
    <property type="entry name" value="MeTrfase_TRM5/TYW2"/>
</dbReference>
<dbReference type="InterPro" id="IPR029063">
    <property type="entry name" value="SAM-dependent_MTases_sf"/>
</dbReference>
<dbReference type="InterPro" id="IPR056743">
    <property type="entry name" value="TRM5-TYW2-like_MTfase"/>
</dbReference>
<dbReference type="InterPro" id="IPR056744">
    <property type="entry name" value="TRM5/TYW2-like_N"/>
</dbReference>
<dbReference type="InterPro" id="IPR025792">
    <property type="entry name" value="tRNA_Gua_MeTrfase_euk"/>
</dbReference>
<dbReference type="PANTHER" id="PTHR23245:SF36">
    <property type="entry name" value="TRNA (GUANINE(37)-N1)-METHYLTRANSFERASE"/>
    <property type="match status" value="1"/>
</dbReference>
<dbReference type="PANTHER" id="PTHR23245">
    <property type="entry name" value="TRNA METHYLTRANSFERASE"/>
    <property type="match status" value="1"/>
</dbReference>
<dbReference type="Pfam" id="PF02475">
    <property type="entry name" value="TRM5-TYW2_MTfase"/>
    <property type="match status" value="1"/>
</dbReference>
<dbReference type="Pfam" id="PF25133">
    <property type="entry name" value="TYW2_N_2"/>
    <property type="match status" value="1"/>
</dbReference>
<dbReference type="SUPFAM" id="SSF53335">
    <property type="entry name" value="S-adenosyl-L-methionine-dependent methyltransferases"/>
    <property type="match status" value="1"/>
</dbReference>
<dbReference type="PROSITE" id="PS51684">
    <property type="entry name" value="SAM_MT_TRM5_TYW2"/>
    <property type="match status" value="1"/>
</dbReference>
<evidence type="ECO:0000255" key="1">
    <source>
        <dbReference type="HAMAP-Rule" id="MF_03152"/>
    </source>
</evidence>
<evidence type="ECO:0000305" key="2"/>
<accession>Q4PHW2</accession>
<accession>A0A0D1D033</accession>
<comment type="function">
    <text evidence="1">Specifically methylates the N1 position of guanosine-37 in various cytoplasmic and mitochondrial tRNAs. Methylation is not dependent on the nature of the nucleoside 5' of the target nucleoside. This is the first step in the biosynthesis of wybutosine (yW), a modified base adjacent to the anticodon of tRNAs and required for accurate decoding.</text>
</comment>
<comment type="catalytic activity">
    <reaction evidence="1">
        <text>guanosine(37) in tRNA + S-adenosyl-L-methionine = N(1)-methylguanosine(37) in tRNA + S-adenosyl-L-homocysteine + H(+)</text>
        <dbReference type="Rhea" id="RHEA:36899"/>
        <dbReference type="Rhea" id="RHEA-COMP:10145"/>
        <dbReference type="Rhea" id="RHEA-COMP:10147"/>
        <dbReference type="ChEBI" id="CHEBI:15378"/>
        <dbReference type="ChEBI" id="CHEBI:57856"/>
        <dbReference type="ChEBI" id="CHEBI:59789"/>
        <dbReference type="ChEBI" id="CHEBI:73542"/>
        <dbReference type="ChEBI" id="CHEBI:74269"/>
        <dbReference type="EC" id="2.1.1.228"/>
    </reaction>
</comment>
<comment type="subunit">
    <text evidence="1">Monomer.</text>
</comment>
<comment type="subcellular location">
    <subcellularLocation>
        <location evidence="1">Mitochondrion matrix</location>
    </subcellularLocation>
    <subcellularLocation>
        <location evidence="1">Nucleus</location>
    </subcellularLocation>
    <subcellularLocation>
        <location evidence="1">Cytoplasm</location>
    </subcellularLocation>
    <text evidence="1">Predominantly in the mitochondria and in the nucleus.</text>
</comment>
<comment type="similarity">
    <text evidence="2">Belongs to the class I-like SAM-binding methyltransferase superfamily. TRM5/TYW2 family.</text>
</comment>
<protein>
    <recommendedName>
        <fullName evidence="1">tRNA (guanine(37)-N(1))-methyltransferase</fullName>
        <ecNumber evidence="1">2.1.1.228</ecNumber>
    </recommendedName>
    <alternativeName>
        <fullName evidence="1">M1G-methyltransferase</fullName>
    </alternativeName>
    <alternativeName>
        <fullName evidence="1">tRNA [GM37] methyltransferase</fullName>
    </alternativeName>
    <alternativeName>
        <fullName evidence="1">tRNA methyltransferase 5</fullName>
    </alternativeName>
</protein>
<organism>
    <name type="scientific">Mycosarcoma maydis</name>
    <name type="common">Corn smut fungus</name>
    <name type="synonym">Ustilago maydis</name>
    <dbReference type="NCBI Taxonomy" id="5270"/>
    <lineage>
        <taxon>Eukaryota</taxon>
        <taxon>Fungi</taxon>
        <taxon>Dikarya</taxon>
        <taxon>Basidiomycota</taxon>
        <taxon>Ustilaginomycotina</taxon>
        <taxon>Ustilaginomycetes</taxon>
        <taxon>Ustilaginales</taxon>
        <taxon>Ustilaginaceae</taxon>
        <taxon>Mycosarcoma</taxon>
    </lineage>
</organism>
<sequence>MSISSCSAQDGCASTAMTRTAMRQNKFATSAPASVPRLTGTEPQLGSMQGAQELLEQLKASFTSSHLIQAIGLSGRQLPLLTKDQEILPYLFNAAGVRYVQPHPNGDASQRILLLNVPASSPTPDVVLSAILKHRLELIHEFELSLGYEHLSSDQILEALLPTSIVDTDGVPTGFTIVGHIAHLNLLSVYKPFRFLVGHIILSKHIGTLRTVVNKLDSIDTQFRFFEMELLAGEADFVAQVSESDCSFQFDFRSVYWNSRLHAEHMRLIKKCRPNQVLADVMAGVGPFAVPAAKRGTWVLANDLNPSSYESLTKNAEINKVLLREGEAKPDKDGGLVATCMDGREFVRWSMLEVWKRGFAGRPMGFDGEQFDVQDDKLRQSARKMRKEQAKKNRALYAVRQAENTLEGAAESLANLSVDEPDVAATMGQVERHPERKLVDHFVMNLPAIALEFLDAFRGAYTHLATIVGKQRLLCQLELHKLDASIHRLPMIHVHCFSKDPFTPALDILTRANEALNIPRDAPYRLMAKPILPPAQTFAGLRKLCDASQSASYLSSHPNYSKYKHLESQHDFMQYVHQEWLERDAAQHTPNLSIHYVRDVAPNKQMYCLSFQCPSQVLWANTSTSQHT</sequence>
<name>TRM5_MYCMD</name>
<keyword id="KW-0963">Cytoplasm</keyword>
<keyword id="KW-0489">Methyltransferase</keyword>
<keyword id="KW-0496">Mitochondrion</keyword>
<keyword id="KW-0539">Nucleus</keyword>
<keyword id="KW-1185">Reference proteome</keyword>
<keyword id="KW-0949">S-adenosyl-L-methionine</keyword>
<keyword id="KW-0808">Transferase</keyword>
<keyword id="KW-0819">tRNA processing</keyword>
<proteinExistence type="inferred from homology"/>
<gene>
    <name evidence="1" type="primary">TRM5</name>
    <name type="ORF">UMAG_10092</name>
</gene>
<feature type="chain" id="PRO_0000414172" description="tRNA (guanine(37)-N(1))-methyltransferase">
    <location>
        <begin position="1"/>
        <end position="628"/>
    </location>
</feature>
<feature type="binding site" evidence="1">
    <location>
        <position position="265"/>
    </location>
    <ligand>
        <name>S-adenosyl-L-methionine</name>
        <dbReference type="ChEBI" id="CHEBI:59789"/>
    </ligand>
</feature>
<feature type="binding site" evidence="1">
    <location>
        <begin position="303"/>
        <end position="304"/>
    </location>
    <ligand>
        <name>S-adenosyl-L-methionine</name>
        <dbReference type="ChEBI" id="CHEBI:59789"/>
    </ligand>
</feature>
<feature type="binding site" evidence="1">
    <location>
        <begin position="342"/>
        <end position="343"/>
    </location>
    <ligand>
        <name>S-adenosyl-L-methionine</name>
        <dbReference type="ChEBI" id="CHEBI:59789"/>
    </ligand>
</feature>
<feature type="binding site" evidence="1">
    <location>
        <position position="445"/>
    </location>
    <ligand>
        <name>S-adenosyl-L-methionine</name>
        <dbReference type="ChEBI" id="CHEBI:59789"/>
    </ligand>
</feature>
<reference key="1">
    <citation type="journal article" date="2006" name="Nature">
        <title>Insights from the genome of the biotrophic fungal plant pathogen Ustilago maydis.</title>
        <authorList>
            <person name="Kaemper J."/>
            <person name="Kahmann R."/>
            <person name="Boelker M."/>
            <person name="Ma L.-J."/>
            <person name="Brefort T."/>
            <person name="Saville B.J."/>
            <person name="Banuett F."/>
            <person name="Kronstad J.W."/>
            <person name="Gold S.E."/>
            <person name="Mueller O."/>
            <person name="Perlin M.H."/>
            <person name="Woesten H.A.B."/>
            <person name="de Vries R."/>
            <person name="Ruiz-Herrera J."/>
            <person name="Reynaga-Pena C.G."/>
            <person name="Snetselaar K."/>
            <person name="McCann M."/>
            <person name="Perez-Martin J."/>
            <person name="Feldbruegge M."/>
            <person name="Basse C.W."/>
            <person name="Steinberg G."/>
            <person name="Ibeas J.I."/>
            <person name="Holloman W."/>
            <person name="Guzman P."/>
            <person name="Farman M.L."/>
            <person name="Stajich J.E."/>
            <person name="Sentandreu R."/>
            <person name="Gonzalez-Prieto J.M."/>
            <person name="Kennell J.C."/>
            <person name="Molina L."/>
            <person name="Schirawski J."/>
            <person name="Mendoza-Mendoza A."/>
            <person name="Greilinger D."/>
            <person name="Muench K."/>
            <person name="Roessel N."/>
            <person name="Scherer M."/>
            <person name="Vranes M."/>
            <person name="Ladendorf O."/>
            <person name="Vincon V."/>
            <person name="Fuchs U."/>
            <person name="Sandrock B."/>
            <person name="Meng S."/>
            <person name="Ho E.C.H."/>
            <person name="Cahill M.J."/>
            <person name="Boyce K.J."/>
            <person name="Klose J."/>
            <person name="Klosterman S.J."/>
            <person name="Deelstra H.J."/>
            <person name="Ortiz-Castellanos L."/>
            <person name="Li W."/>
            <person name="Sanchez-Alonso P."/>
            <person name="Schreier P.H."/>
            <person name="Haeuser-Hahn I."/>
            <person name="Vaupel M."/>
            <person name="Koopmann E."/>
            <person name="Friedrich G."/>
            <person name="Voss H."/>
            <person name="Schlueter T."/>
            <person name="Margolis J."/>
            <person name="Platt D."/>
            <person name="Swimmer C."/>
            <person name="Gnirke A."/>
            <person name="Chen F."/>
            <person name="Vysotskaia V."/>
            <person name="Mannhaupt G."/>
            <person name="Gueldener U."/>
            <person name="Muensterkoetter M."/>
            <person name="Haase D."/>
            <person name="Oesterheld M."/>
            <person name="Mewes H.-W."/>
            <person name="Mauceli E.W."/>
            <person name="DeCaprio D."/>
            <person name="Wade C.M."/>
            <person name="Butler J."/>
            <person name="Young S.K."/>
            <person name="Jaffe D.B."/>
            <person name="Calvo S.E."/>
            <person name="Nusbaum C."/>
            <person name="Galagan J.E."/>
            <person name="Birren B.W."/>
        </authorList>
    </citation>
    <scope>NUCLEOTIDE SEQUENCE [LARGE SCALE GENOMIC DNA]</scope>
    <source>
        <strain>DSM 14603 / FGSC 9021 / UM521</strain>
    </source>
</reference>
<reference key="2">
    <citation type="submission" date="2014-09" db="EMBL/GenBank/DDBJ databases">
        <authorList>
            <person name="Gueldener U."/>
            <person name="Muensterkoetter M."/>
            <person name="Walter M.C."/>
            <person name="Mannhaupt G."/>
            <person name="Kahmann R."/>
        </authorList>
    </citation>
    <scope>GENOME REANNOTATION</scope>
    <source>
        <strain>DSM 14603 / FGSC 9021 / UM521</strain>
    </source>
</reference>